<accession>A1ST53</accession>
<reference key="1">
    <citation type="journal article" date="2008" name="BMC Genomics">
        <title>Genomics of an extreme psychrophile, Psychromonas ingrahamii.</title>
        <authorList>
            <person name="Riley M."/>
            <person name="Staley J.T."/>
            <person name="Danchin A."/>
            <person name="Wang T.Z."/>
            <person name="Brettin T.S."/>
            <person name="Hauser L.J."/>
            <person name="Land M.L."/>
            <person name="Thompson L.S."/>
        </authorList>
    </citation>
    <scope>NUCLEOTIDE SEQUENCE [LARGE SCALE GENOMIC DNA]</scope>
    <source>
        <strain>DSM 17664 / CCUG 51855 / 37</strain>
    </source>
</reference>
<feature type="chain" id="PRO_0000329793" description="Polyribonucleotide nucleotidyltransferase">
    <location>
        <begin position="1"/>
        <end position="698"/>
    </location>
</feature>
<feature type="domain" description="KH" evidence="1">
    <location>
        <begin position="552"/>
        <end position="611"/>
    </location>
</feature>
<feature type="domain" description="S1 motif" evidence="1">
    <location>
        <begin position="621"/>
        <end position="689"/>
    </location>
</feature>
<feature type="binding site" evidence="1">
    <location>
        <position position="485"/>
    </location>
    <ligand>
        <name>Mg(2+)</name>
        <dbReference type="ChEBI" id="CHEBI:18420"/>
    </ligand>
</feature>
<feature type="binding site" evidence="1">
    <location>
        <position position="491"/>
    </location>
    <ligand>
        <name>Mg(2+)</name>
        <dbReference type="ChEBI" id="CHEBI:18420"/>
    </ligand>
</feature>
<proteinExistence type="inferred from homology"/>
<gene>
    <name evidence="1" type="primary">pnp</name>
    <name type="ordered locus">Ping_0825</name>
</gene>
<sequence length="698" mass="75643">MTPIVKSFQYGEHTVTLETGVMARQATAAVMCSMDDTCVFVSVVGKNADNQERDFFPLTVNYQEKTYAAGKIPGGFFKREGRPSEDETLIARLIDRPVRPLFPAGFKNEVQVIATVVSINPEVNPDVVAMIATSAALSISGMPFKGPIGCARVGYKEGEYLLNPTKTELETSDLNLVVSGTDNAVLMVESEAGILSEDVMLGAVVFGHDQQQIVVESIKEFAAEVARPAWNWAAPARNEALDAAIATEAQARFEQAYQISDKGDRYDAIKAITSEVKEKLLASDETLEAKQIGEYLHDLEKTVVRTRIIKGEPRIDGRDPESIRALDVRTGVLPRTHGSALFTRGETQALVTATLGTQRDAQIIDSIMGEKKDNFLLHYNFPPYCVGETGFVGSPKRREIGHGRLAKRGVLAVMPSLEEFPYTVRVVSEITESNGSSSMASVCGASLALMDAGVPLKASVAGIAMGLVKEGEEFVVLSDILGDEDHLGDMDFKVAGTTEGITALQMDIKIEGITREIMQIALNQAKAARLHILTVMDQALPQGRADISQFAPRIHTIKINTDKIRDVIGKGGAVIRSLCEETGTTIEIEDDGTVKIAATSGEQADDAINRIKALTAEVEVGTIYTGKVVRLADFGAFVNILPGKDGLVHISQICEERVQKVSDHLKEGQEVKVKVLEVDRQGRVRLSIKEAAEKTTAE</sequence>
<keyword id="KW-0963">Cytoplasm</keyword>
<keyword id="KW-0460">Magnesium</keyword>
<keyword id="KW-0479">Metal-binding</keyword>
<keyword id="KW-0548">Nucleotidyltransferase</keyword>
<keyword id="KW-1185">Reference proteome</keyword>
<keyword id="KW-0694">RNA-binding</keyword>
<keyword id="KW-0808">Transferase</keyword>
<comment type="function">
    <text evidence="1">Involved in mRNA degradation. Catalyzes the phosphorolysis of single-stranded polyribonucleotides processively in the 3'- to 5'-direction.</text>
</comment>
<comment type="catalytic activity">
    <reaction evidence="1">
        <text>RNA(n+1) + phosphate = RNA(n) + a ribonucleoside 5'-diphosphate</text>
        <dbReference type="Rhea" id="RHEA:22096"/>
        <dbReference type="Rhea" id="RHEA-COMP:14527"/>
        <dbReference type="Rhea" id="RHEA-COMP:17342"/>
        <dbReference type="ChEBI" id="CHEBI:43474"/>
        <dbReference type="ChEBI" id="CHEBI:57930"/>
        <dbReference type="ChEBI" id="CHEBI:140395"/>
        <dbReference type="EC" id="2.7.7.8"/>
    </reaction>
</comment>
<comment type="cofactor">
    <cofactor evidence="1">
        <name>Mg(2+)</name>
        <dbReference type="ChEBI" id="CHEBI:18420"/>
    </cofactor>
</comment>
<comment type="subunit">
    <text evidence="1">Component of the RNA degradosome, which is a multiprotein complex involved in RNA processing and mRNA degradation.</text>
</comment>
<comment type="subcellular location">
    <subcellularLocation>
        <location evidence="1">Cytoplasm</location>
    </subcellularLocation>
</comment>
<comment type="similarity">
    <text evidence="1">Belongs to the polyribonucleotide nucleotidyltransferase family.</text>
</comment>
<protein>
    <recommendedName>
        <fullName evidence="1">Polyribonucleotide nucleotidyltransferase</fullName>
        <ecNumber evidence="1">2.7.7.8</ecNumber>
    </recommendedName>
    <alternativeName>
        <fullName evidence="1">Polynucleotide phosphorylase</fullName>
        <shortName evidence="1">PNPase</shortName>
    </alternativeName>
</protein>
<organism>
    <name type="scientific">Psychromonas ingrahamii (strain DSM 17664 / CCUG 51855 / 37)</name>
    <dbReference type="NCBI Taxonomy" id="357804"/>
    <lineage>
        <taxon>Bacteria</taxon>
        <taxon>Pseudomonadati</taxon>
        <taxon>Pseudomonadota</taxon>
        <taxon>Gammaproteobacteria</taxon>
        <taxon>Alteromonadales</taxon>
        <taxon>Psychromonadaceae</taxon>
        <taxon>Psychromonas</taxon>
    </lineage>
</organism>
<dbReference type="EC" id="2.7.7.8" evidence="1"/>
<dbReference type="EMBL" id="CP000510">
    <property type="protein sequence ID" value="ABM02668.1"/>
    <property type="molecule type" value="Genomic_DNA"/>
</dbReference>
<dbReference type="RefSeq" id="WP_011769231.1">
    <property type="nucleotide sequence ID" value="NC_008709.1"/>
</dbReference>
<dbReference type="SMR" id="A1ST53"/>
<dbReference type="STRING" id="357804.Ping_0825"/>
<dbReference type="KEGG" id="pin:Ping_0825"/>
<dbReference type="eggNOG" id="COG1185">
    <property type="taxonomic scope" value="Bacteria"/>
</dbReference>
<dbReference type="HOGENOM" id="CLU_004217_2_2_6"/>
<dbReference type="OrthoDB" id="9804305at2"/>
<dbReference type="Proteomes" id="UP000000639">
    <property type="component" value="Chromosome"/>
</dbReference>
<dbReference type="GO" id="GO:0005829">
    <property type="term" value="C:cytosol"/>
    <property type="evidence" value="ECO:0007669"/>
    <property type="project" value="TreeGrafter"/>
</dbReference>
<dbReference type="GO" id="GO:0000175">
    <property type="term" value="F:3'-5'-RNA exonuclease activity"/>
    <property type="evidence" value="ECO:0007669"/>
    <property type="project" value="TreeGrafter"/>
</dbReference>
<dbReference type="GO" id="GO:0000287">
    <property type="term" value="F:magnesium ion binding"/>
    <property type="evidence" value="ECO:0007669"/>
    <property type="project" value="UniProtKB-UniRule"/>
</dbReference>
<dbReference type="GO" id="GO:0004654">
    <property type="term" value="F:polyribonucleotide nucleotidyltransferase activity"/>
    <property type="evidence" value="ECO:0007669"/>
    <property type="project" value="UniProtKB-UniRule"/>
</dbReference>
<dbReference type="GO" id="GO:0003723">
    <property type="term" value="F:RNA binding"/>
    <property type="evidence" value="ECO:0007669"/>
    <property type="project" value="UniProtKB-UniRule"/>
</dbReference>
<dbReference type="GO" id="GO:0006402">
    <property type="term" value="P:mRNA catabolic process"/>
    <property type="evidence" value="ECO:0007669"/>
    <property type="project" value="UniProtKB-UniRule"/>
</dbReference>
<dbReference type="GO" id="GO:0006396">
    <property type="term" value="P:RNA processing"/>
    <property type="evidence" value="ECO:0007669"/>
    <property type="project" value="InterPro"/>
</dbReference>
<dbReference type="CDD" id="cd02393">
    <property type="entry name" value="KH-I_PNPase"/>
    <property type="match status" value="1"/>
</dbReference>
<dbReference type="CDD" id="cd11363">
    <property type="entry name" value="RNase_PH_PNPase_1"/>
    <property type="match status" value="1"/>
</dbReference>
<dbReference type="CDD" id="cd11364">
    <property type="entry name" value="RNase_PH_PNPase_2"/>
    <property type="match status" value="1"/>
</dbReference>
<dbReference type="CDD" id="cd04472">
    <property type="entry name" value="S1_PNPase"/>
    <property type="match status" value="1"/>
</dbReference>
<dbReference type="FunFam" id="2.40.50.140:FF:000023">
    <property type="entry name" value="Polyribonucleotide nucleotidyltransferase"/>
    <property type="match status" value="1"/>
</dbReference>
<dbReference type="FunFam" id="3.30.1370.10:FF:000001">
    <property type="entry name" value="Polyribonucleotide nucleotidyltransferase"/>
    <property type="match status" value="1"/>
</dbReference>
<dbReference type="FunFam" id="3.30.230.70:FF:000001">
    <property type="entry name" value="Polyribonucleotide nucleotidyltransferase"/>
    <property type="match status" value="1"/>
</dbReference>
<dbReference type="FunFam" id="3.30.230.70:FF:000002">
    <property type="entry name" value="Polyribonucleotide nucleotidyltransferase"/>
    <property type="match status" value="1"/>
</dbReference>
<dbReference type="Gene3D" id="3.30.230.70">
    <property type="entry name" value="GHMP Kinase, N-terminal domain"/>
    <property type="match status" value="2"/>
</dbReference>
<dbReference type="Gene3D" id="3.30.1370.10">
    <property type="entry name" value="K Homology domain, type 1"/>
    <property type="match status" value="1"/>
</dbReference>
<dbReference type="Gene3D" id="2.40.50.140">
    <property type="entry name" value="Nucleic acid-binding proteins"/>
    <property type="match status" value="1"/>
</dbReference>
<dbReference type="HAMAP" id="MF_01595">
    <property type="entry name" value="PNPase"/>
    <property type="match status" value="1"/>
</dbReference>
<dbReference type="InterPro" id="IPR001247">
    <property type="entry name" value="ExoRNase_PH_dom1"/>
</dbReference>
<dbReference type="InterPro" id="IPR015847">
    <property type="entry name" value="ExoRNase_PH_dom2"/>
</dbReference>
<dbReference type="InterPro" id="IPR036345">
    <property type="entry name" value="ExoRNase_PH_dom2_sf"/>
</dbReference>
<dbReference type="InterPro" id="IPR004087">
    <property type="entry name" value="KH_dom"/>
</dbReference>
<dbReference type="InterPro" id="IPR004088">
    <property type="entry name" value="KH_dom_type_1"/>
</dbReference>
<dbReference type="InterPro" id="IPR036612">
    <property type="entry name" value="KH_dom_type_1_sf"/>
</dbReference>
<dbReference type="InterPro" id="IPR012340">
    <property type="entry name" value="NA-bd_OB-fold"/>
</dbReference>
<dbReference type="InterPro" id="IPR012162">
    <property type="entry name" value="PNPase"/>
</dbReference>
<dbReference type="InterPro" id="IPR027408">
    <property type="entry name" value="PNPase/RNase_PH_dom_sf"/>
</dbReference>
<dbReference type="InterPro" id="IPR015848">
    <property type="entry name" value="PNPase_PH_RNA-bd_bac/org-type"/>
</dbReference>
<dbReference type="InterPro" id="IPR020568">
    <property type="entry name" value="Ribosomal_Su5_D2-typ_SF"/>
</dbReference>
<dbReference type="InterPro" id="IPR003029">
    <property type="entry name" value="S1_domain"/>
</dbReference>
<dbReference type="NCBIfam" id="TIGR03591">
    <property type="entry name" value="polynuc_phos"/>
    <property type="match status" value="1"/>
</dbReference>
<dbReference type="NCBIfam" id="NF008805">
    <property type="entry name" value="PRK11824.1"/>
    <property type="match status" value="1"/>
</dbReference>
<dbReference type="PANTHER" id="PTHR11252">
    <property type="entry name" value="POLYRIBONUCLEOTIDE NUCLEOTIDYLTRANSFERASE"/>
    <property type="match status" value="1"/>
</dbReference>
<dbReference type="PANTHER" id="PTHR11252:SF0">
    <property type="entry name" value="POLYRIBONUCLEOTIDE NUCLEOTIDYLTRANSFERASE 1, MITOCHONDRIAL"/>
    <property type="match status" value="1"/>
</dbReference>
<dbReference type="Pfam" id="PF00013">
    <property type="entry name" value="KH_1"/>
    <property type="match status" value="1"/>
</dbReference>
<dbReference type="Pfam" id="PF03726">
    <property type="entry name" value="PNPase"/>
    <property type="match status" value="1"/>
</dbReference>
<dbReference type="Pfam" id="PF01138">
    <property type="entry name" value="RNase_PH"/>
    <property type="match status" value="2"/>
</dbReference>
<dbReference type="Pfam" id="PF03725">
    <property type="entry name" value="RNase_PH_C"/>
    <property type="match status" value="2"/>
</dbReference>
<dbReference type="Pfam" id="PF00575">
    <property type="entry name" value="S1"/>
    <property type="match status" value="1"/>
</dbReference>
<dbReference type="PIRSF" id="PIRSF005499">
    <property type="entry name" value="PNPase"/>
    <property type="match status" value="1"/>
</dbReference>
<dbReference type="SMART" id="SM00322">
    <property type="entry name" value="KH"/>
    <property type="match status" value="1"/>
</dbReference>
<dbReference type="SMART" id="SM00316">
    <property type="entry name" value="S1"/>
    <property type="match status" value="1"/>
</dbReference>
<dbReference type="SUPFAM" id="SSF54791">
    <property type="entry name" value="Eukaryotic type KH-domain (KH-domain type I)"/>
    <property type="match status" value="1"/>
</dbReference>
<dbReference type="SUPFAM" id="SSF50249">
    <property type="entry name" value="Nucleic acid-binding proteins"/>
    <property type="match status" value="1"/>
</dbReference>
<dbReference type="SUPFAM" id="SSF55666">
    <property type="entry name" value="Ribonuclease PH domain 2-like"/>
    <property type="match status" value="2"/>
</dbReference>
<dbReference type="SUPFAM" id="SSF54211">
    <property type="entry name" value="Ribosomal protein S5 domain 2-like"/>
    <property type="match status" value="2"/>
</dbReference>
<dbReference type="PROSITE" id="PS50084">
    <property type="entry name" value="KH_TYPE_1"/>
    <property type="match status" value="1"/>
</dbReference>
<dbReference type="PROSITE" id="PS50126">
    <property type="entry name" value="S1"/>
    <property type="match status" value="1"/>
</dbReference>
<name>PNP_PSYIN</name>
<evidence type="ECO:0000255" key="1">
    <source>
        <dbReference type="HAMAP-Rule" id="MF_01595"/>
    </source>
</evidence>